<keyword id="KW-0030">Aminoacyl-tRNA synthetase</keyword>
<keyword id="KW-0067">ATP-binding</keyword>
<keyword id="KW-0963">Cytoplasm</keyword>
<keyword id="KW-0436">Ligase</keyword>
<keyword id="KW-0547">Nucleotide-binding</keyword>
<keyword id="KW-0648">Protein biosynthesis</keyword>
<keyword id="KW-1185">Reference proteome</keyword>
<evidence type="ECO:0000255" key="1">
    <source>
        <dbReference type="HAMAP-Rule" id="MF_00253"/>
    </source>
</evidence>
<sequence length="570" mass="65836">MHMSEIMEMLIRRGFLWQSFEIYGGMAGFIDYAPLGNNLRRKIENIWRKYFVINERAAEIDTPTIGIEEVFIASGHATSFTDVAIECENCGRVYRADHYVKEKLGIEVDETVEAVKEVMEVYDLKCECGGRFKDPAPMNLMFSTTIGPGKGKKGYLRPETAQGMFVDFKRLANFFREKLPFGVAQIGRAYRNEISPRQGVIRLREFNQAELEFFVHPGEKKHPHFSLYAKDVVKLVDKFDSQHEITLEEAVEKGIIANQILAYFIGKTRRFLLEIGIKDEKLRFRQHKDVERAHYATDCWDAEVLTSYGWIEVVGIADRTNYDLKRHSKFSGEDLSVFVPYEEPVKVKRRKIVPILSKLGPEFRQKAKKVAEALEALNVEADLDEVEVEVDGEKVKVTKEFFEIQEVEEEVTGEKVIPHVIEPSFGLDRITYSVLEHAFDKDVVDGEERRVLRLKRWVSPIEVAVLPLLSREPFESKGMEIVQMLREEGIFTDYDDSGSIGRRYRRFDEIGTPFCVTVDHQTFEDETVTIRDRDTTAQVRVKLGELPSILKELLRSEKDITEFGEVFRQV</sequence>
<dbReference type="EC" id="6.1.1.14" evidence="1"/>
<dbReference type="EMBL" id="AE000782">
    <property type="protein sequence ID" value="AAB90321.1"/>
    <property type="molecule type" value="Genomic_DNA"/>
</dbReference>
<dbReference type="PIR" id="D69364">
    <property type="entry name" value="D69364"/>
</dbReference>
<dbReference type="SMR" id="O29346"/>
<dbReference type="STRING" id="224325.AF_0916"/>
<dbReference type="PaxDb" id="224325-AF_0916"/>
<dbReference type="EnsemblBacteria" id="AAB90321">
    <property type="protein sequence ID" value="AAB90321"/>
    <property type="gene ID" value="AF_0916"/>
</dbReference>
<dbReference type="KEGG" id="afu:AF_0916"/>
<dbReference type="eggNOG" id="arCOG00405">
    <property type="taxonomic scope" value="Archaea"/>
</dbReference>
<dbReference type="HOGENOM" id="CLU_015515_1_0_2"/>
<dbReference type="PhylomeDB" id="O29346"/>
<dbReference type="Proteomes" id="UP000002199">
    <property type="component" value="Chromosome"/>
</dbReference>
<dbReference type="GO" id="GO:0005737">
    <property type="term" value="C:cytoplasm"/>
    <property type="evidence" value="ECO:0007669"/>
    <property type="project" value="UniProtKB-SubCell"/>
</dbReference>
<dbReference type="GO" id="GO:0005524">
    <property type="term" value="F:ATP binding"/>
    <property type="evidence" value="ECO:0007669"/>
    <property type="project" value="UniProtKB-UniRule"/>
</dbReference>
<dbReference type="GO" id="GO:0004820">
    <property type="term" value="F:glycine-tRNA ligase activity"/>
    <property type="evidence" value="ECO:0000250"/>
    <property type="project" value="UniProtKB"/>
</dbReference>
<dbReference type="GO" id="GO:0046983">
    <property type="term" value="F:protein dimerization activity"/>
    <property type="evidence" value="ECO:0000250"/>
    <property type="project" value="UniProtKB"/>
</dbReference>
<dbReference type="GO" id="GO:0006426">
    <property type="term" value="P:glycyl-tRNA aminoacylation"/>
    <property type="evidence" value="ECO:0007669"/>
    <property type="project" value="UniProtKB-UniRule"/>
</dbReference>
<dbReference type="CDD" id="cd00774">
    <property type="entry name" value="GlyRS-like_core"/>
    <property type="match status" value="1"/>
</dbReference>
<dbReference type="CDD" id="cd00858">
    <property type="entry name" value="GlyRS_anticodon"/>
    <property type="match status" value="1"/>
</dbReference>
<dbReference type="FunFam" id="3.40.50.800:FF:000002">
    <property type="entry name" value="Glycine--tRNA ligase"/>
    <property type="match status" value="1"/>
</dbReference>
<dbReference type="Gene3D" id="3.30.40.230">
    <property type="match status" value="1"/>
</dbReference>
<dbReference type="Gene3D" id="3.30.720.200">
    <property type="match status" value="1"/>
</dbReference>
<dbReference type="Gene3D" id="3.40.50.800">
    <property type="entry name" value="Anticodon-binding domain"/>
    <property type="match status" value="1"/>
</dbReference>
<dbReference type="Gene3D" id="3.30.930.10">
    <property type="entry name" value="Bira Bifunctional Protein, Domain 2"/>
    <property type="match status" value="1"/>
</dbReference>
<dbReference type="HAMAP" id="MF_00253_A">
    <property type="entry name" value="Gly_tRNA_synth_A"/>
    <property type="match status" value="1"/>
</dbReference>
<dbReference type="InterPro" id="IPR002314">
    <property type="entry name" value="aa-tRNA-synt_IIb"/>
</dbReference>
<dbReference type="InterPro" id="IPR006195">
    <property type="entry name" value="aa-tRNA-synth_II"/>
</dbReference>
<dbReference type="InterPro" id="IPR045864">
    <property type="entry name" value="aa-tRNA-synth_II/BPL/LPL"/>
</dbReference>
<dbReference type="InterPro" id="IPR004154">
    <property type="entry name" value="Anticodon-bd"/>
</dbReference>
<dbReference type="InterPro" id="IPR036621">
    <property type="entry name" value="Anticodon-bd_dom_sf"/>
</dbReference>
<dbReference type="InterPro" id="IPR027031">
    <property type="entry name" value="Gly-tRNA_synthase/POLG2"/>
</dbReference>
<dbReference type="InterPro" id="IPR022960">
    <property type="entry name" value="Gly_tRNA_ligase_arc"/>
</dbReference>
<dbReference type="InterPro" id="IPR033731">
    <property type="entry name" value="GlyRS-like_core"/>
</dbReference>
<dbReference type="InterPro" id="IPR002315">
    <property type="entry name" value="tRNA-synt_gly"/>
</dbReference>
<dbReference type="NCBIfam" id="TIGR00389">
    <property type="entry name" value="glyS_dimeric"/>
    <property type="match status" value="1"/>
</dbReference>
<dbReference type="NCBIfam" id="NF003211">
    <property type="entry name" value="PRK04173.1"/>
    <property type="match status" value="1"/>
</dbReference>
<dbReference type="PANTHER" id="PTHR10745:SF0">
    <property type="entry name" value="GLYCINE--TRNA LIGASE"/>
    <property type="match status" value="1"/>
</dbReference>
<dbReference type="PANTHER" id="PTHR10745">
    <property type="entry name" value="GLYCYL-TRNA SYNTHETASE/DNA POLYMERASE SUBUNIT GAMMA-2"/>
    <property type="match status" value="1"/>
</dbReference>
<dbReference type="Pfam" id="PF03129">
    <property type="entry name" value="HGTP_anticodon"/>
    <property type="match status" value="1"/>
</dbReference>
<dbReference type="Pfam" id="PF00587">
    <property type="entry name" value="tRNA-synt_2b"/>
    <property type="match status" value="1"/>
</dbReference>
<dbReference type="PRINTS" id="PR01043">
    <property type="entry name" value="TRNASYNTHGLY"/>
</dbReference>
<dbReference type="SUPFAM" id="SSF52954">
    <property type="entry name" value="Class II aaRS ABD-related"/>
    <property type="match status" value="1"/>
</dbReference>
<dbReference type="SUPFAM" id="SSF55681">
    <property type="entry name" value="Class II aaRS and biotin synthetases"/>
    <property type="match status" value="1"/>
</dbReference>
<dbReference type="PROSITE" id="PS50862">
    <property type="entry name" value="AA_TRNA_LIGASE_II"/>
    <property type="match status" value="1"/>
</dbReference>
<name>SYG_ARCFU</name>
<accession>O29346</accession>
<protein>
    <recommendedName>
        <fullName evidence="1">Glycine--tRNA ligase</fullName>
        <ecNumber evidence="1">6.1.1.14</ecNumber>
    </recommendedName>
    <alternativeName>
        <fullName evidence="1">Glycyl-tRNA synthetase</fullName>
        <shortName evidence="1">GlyRS</shortName>
    </alternativeName>
</protein>
<gene>
    <name evidence="1" type="primary">glyS</name>
    <name type="ordered locus">AF_0916</name>
</gene>
<comment type="function">
    <text evidence="1">Catalyzes the attachment of glycine to tRNA(Gly).</text>
</comment>
<comment type="catalytic activity">
    <reaction evidence="1">
        <text>tRNA(Gly) + glycine + ATP = glycyl-tRNA(Gly) + AMP + diphosphate</text>
        <dbReference type="Rhea" id="RHEA:16013"/>
        <dbReference type="Rhea" id="RHEA-COMP:9664"/>
        <dbReference type="Rhea" id="RHEA-COMP:9683"/>
        <dbReference type="ChEBI" id="CHEBI:30616"/>
        <dbReference type="ChEBI" id="CHEBI:33019"/>
        <dbReference type="ChEBI" id="CHEBI:57305"/>
        <dbReference type="ChEBI" id="CHEBI:78442"/>
        <dbReference type="ChEBI" id="CHEBI:78522"/>
        <dbReference type="ChEBI" id="CHEBI:456215"/>
        <dbReference type="EC" id="6.1.1.14"/>
    </reaction>
</comment>
<comment type="subcellular location">
    <subcellularLocation>
        <location evidence="1">Cytoplasm</location>
    </subcellularLocation>
</comment>
<comment type="similarity">
    <text evidence="1">Belongs to the class-II aminoacyl-tRNA synthetase family.</text>
</comment>
<reference key="1">
    <citation type="journal article" date="1997" name="Nature">
        <title>The complete genome sequence of the hyperthermophilic, sulphate-reducing archaeon Archaeoglobus fulgidus.</title>
        <authorList>
            <person name="Klenk H.-P."/>
            <person name="Clayton R.A."/>
            <person name="Tomb J.-F."/>
            <person name="White O."/>
            <person name="Nelson K.E."/>
            <person name="Ketchum K.A."/>
            <person name="Dodson R.J."/>
            <person name="Gwinn M.L."/>
            <person name="Hickey E.K."/>
            <person name="Peterson J.D."/>
            <person name="Richardson D.L."/>
            <person name="Kerlavage A.R."/>
            <person name="Graham D.E."/>
            <person name="Kyrpides N.C."/>
            <person name="Fleischmann R.D."/>
            <person name="Quackenbush J."/>
            <person name="Lee N.H."/>
            <person name="Sutton G.G."/>
            <person name="Gill S.R."/>
            <person name="Kirkness E.F."/>
            <person name="Dougherty B.A."/>
            <person name="McKenney K."/>
            <person name="Adams M.D."/>
            <person name="Loftus B.J."/>
            <person name="Peterson S.N."/>
            <person name="Reich C.I."/>
            <person name="McNeil L.K."/>
            <person name="Badger J.H."/>
            <person name="Glodek A."/>
            <person name="Zhou L."/>
            <person name="Overbeek R."/>
            <person name="Gocayne J.D."/>
            <person name="Weidman J.F."/>
            <person name="McDonald L.A."/>
            <person name="Utterback T.R."/>
            <person name="Cotton M.D."/>
            <person name="Spriggs T."/>
            <person name="Artiach P."/>
            <person name="Kaine B.P."/>
            <person name="Sykes S.M."/>
            <person name="Sadow P.W."/>
            <person name="D'Andrea K.P."/>
            <person name="Bowman C."/>
            <person name="Fujii C."/>
            <person name="Garland S.A."/>
            <person name="Mason T.M."/>
            <person name="Olsen G.J."/>
            <person name="Fraser C.M."/>
            <person name="Smith H.O."/>
            <person name="Woese C.R."/>
            <person name="Venter J.C."/>
        </authorList>
    </citation>
    <scope>NUCLEOTIDE SEQUENCE [LARGE SCALE GENOMIC DNA]</scope>
    <source>
        <strain>ATCC 49558 / DSM 4304 / JCM 9628 / NBRC 100126 / VC-16</strain>
    </source>
</reference>
<organism>
    <name type="scientific">Archaeoglobus fulgidus (strain ATCC 49558 / DSM 4304 / JCM 9628 / NBRC 100126 / VC-16)</name>
    <dbReference type="NCBI Taxonomy" id="224325"/>
    <lineage>
        <taxon>Archaea</taxon>
        <taxon>Methanobacteriati</taxon>
        <taxon>Methanobacteriota</taxon>
        <taxon>Archaeoglobi</taxon>
        <taxon>Archaeoglobales</taxon>
        <taxon>Archaeoglobaceae</taxon>
        <taxon>Archaeoglobus</taxon>
    </lineage>
</organism>
<feature type="chain" id="PRO_0000072989" description="Glycine--tRNA ligase">
    <location>
        <begin position="1"/>
        <end position="570"/>
    </location>
</feature>
<feature type="binding site" evidence="1">
    <location>
        <position position="95"/>
    </location>
    <ligand>
        <name>substrate</name>
    </ligand>
</feature>
<feature type="binding site" evidence="1">
    <location>
        <position position="159"/>
    </location>
    <ligand>
        <name>substrate</name>
    </ligand>
</feature>
<feature type="binding site" evidence="1">
    <location>
        <begin position="191"/>
        <end position="193"/>
    </location>
    <ligand>
        <name>ATP</name>
        <dbReference type="ChEBI" id="CHEBI:30616"/>
    </ligand>
</feature>
<feature type="binding site" evidence="1">
    <location>
        <begin position="201"/>
        <end position="206"/>
    </location>
    <ligand>
        <name>ATP</name>
        <dbReference type="ChEBI" id="CHEBI:30616"/>
    </ligand>
</feature>
<feature type="binding site" evidence="1">
    <location>
        <begin position="206"/>
        <end position="210"/>
    </location>
    <ligand>
        <name>substrate</name>
    </ligand>
</feature>
<feature type="binding site" evidence="1">
    <location>
        <begin position="312"/>
        <end position="313"/>
    </location>
    <ligand>
        <name>ATP</name>
        <dbReference type="ChEBI" id="CHEBI:30616"/>
    </ligand>
</feature>
<feature type="binding site" evidence="1">
    <location>
        <begin position="422"/>
        <end position="426"/>
    </location>
    <ligand>
        <name>substrate</name>
    </ligand>
</feature>
<feature type="binding site" evidence="1">
    <location>
        <begin position="426"/>
        <end position="429"/>
    </location>
    <ligand>
        <name>ATP</name>
        <dbReference type="ChEBI" id="CHEBI:30616"/>
    </ligand>
</feature>
<proteinExistence type="inferred from homology"/>